<protein>
    <recommendedName>
        <fullName evidence="1">4-hydroxy-3-methylbut-2-enyl diphosphate reductase</fullName>
        <shortName evidence="1">HMBPP reductase</shortName>
        <ecNumber evidence="1">1.17.7.4</ecNumber>
    </recommendedName>
</protein>
<dbReference type="EC" id="1.17.7.4" evidence="1"/>
<dbReference type="EMBL" id="AL157959">
    <property type="protein sequence ID" value="CAM07890.1"/>
    <property type="molecule type" value="Genomic_DNA"/>
</dbReference>
<dbReference type="RefSeq" id="WP_002221497.1">
    <property type="nucleotide sequence ID" value="NC_003116.1"/>
</dbReference>
<dbReference type="SMR" id="P65191"/>
<dbReference type="EnsemblBacteria" id="CAM07890">
    <property type="protein sequence ID" value="CAM07890"/>
    <property type="gene ID" value="NMA0624"/>
</dbReference>
<dbReference type="GeneID" id="93386737"/>
<dbReference type="KEGG" id="nma:NMA0624"/>
<dbReference type="HOGENOM" id="CLU_027486_1_1_4"/>
<dbReference type="UniPathway" id="UPA00056">
    <property type="reaction ID" value="UER00097"/>
</dbReference>
<dbReference type="UniPathway" id="UPA00059">
    <property type="reaction ID" value="UER00105"/>
</dbReference>
<dbReference type="Proteomes" id="UP000000626">
    <property type="component" value="Chromosome"/>
</dbReference>
<dbReference type="GO" id="GO:0051539">
    <property type="term" value="F:4 iron, 4 sulfur cluster binding"/>
    <property type="evidence" value="ECO:0007669"/>
    <property type="project" value="UniProtKB-UniRule"/>
</dbReference>
<dbReference type="GO" id="GO:0051745">
    <property type="term" value="F:4-hydroxy-3-methylbut-2-enyl diphosphate reductase activity"/>
    <property type="evidence" value="ECO:0007669"/>
    <property type="project" value="UniProtKB-UniRule"/>
</dbReference>
<dbReference type="GO" id="GO:0046872">
    <property type="term" value="F:metal ion binding"/>
    <property type="evidence" value="ECO:0007669"/>
    <property type="project" value="UniProtKB-KW"/>
</dbReference>
<dbReference type="GO" id="GO:0050992">
    <property type="term" value="P:dimethylallyl diphosphate biosynthetic process"/>
    <property type="evidence" value="ECO:0007669"/>
    <property type="project" value="UniProtKB-UniRule"/>
</dbReference>
<dbReference type="GO" id="GO:0019288">
    <property type="term" value="P:isopentenyl diphosphate biosynthetic process, methylerythritol 4-phosphate pathway"/>
    <property type="evidence" value="ECO:0007669"/>
    <property type="project" value="UniProtKB-UniRule"/>
</dbReference>
<dbReference type="GO" id="GO:0016114">
    <property type="term" value="P:terpenoid biosynthetic process"/>
    <property type="evidence" value="ECO:0007669"/>
    <property type="project" value="UniProtKB-UniRule"/>
</dbReference>
<dbReference type="CDD" id="cd13944">
    <property type="entry name" value="lytB_ispH"/>
    <property type="match status" value="1"/>
</dbReference>
<dbReference type="Gene3D" id="3.40.50.11270">
    <property type="match status" value="1"/>
</dbReference>
<dbReference type="Gene3D" id="3.40.1010.20">
    <property type="entry name" value="4-hydroxy-3-methylbut-2-enyl diphosphate reductase, catalytic domain"/>
    <property type="match status" value="2"/>
</dbReference>
<dbReference type="HAMAP" id="MF_00191">
    <property type="entry name" value="IspH"/>
    <property type="match status" value="1"/>
</dbReference>
<dbReference type="InterPro" id="IPR003451">
    <property type="entry name" value="LytB/IspH"/>
</dbReference>
<dbReference type="NCBIfam" id="TIGR00216">
    <property type="entry name" value="ispH_lytB"/>
    <property type="match status" value="1"/>
</dbReference>
<dbReference type="NCBIfam" id="NF002188">
    <property type="entry name" value="PRK01045.1-2"/>
    <property type="match status" value="1"/>
</dbReference>
<dbReference type="NCBIfam" id="NF002189">
    <property type="entry name" value="PRK01045.1-3"/>
    <property type="match status" value="1"/>
</dbReference>
<dbReference type="NCBIfam" id="NF002190">
    <property type="entry name" value="PRK01045.1-4"/>
    <property type="match status" value="1"/>
</dbReference>
<dbReference type="PANTHER" id="PTHR30426">
    <property type="entry name" value="4-HYDROXY-3-METHYLBUT-2-ENYL DIPHOSPHATE REDUCTASE"/>
    <property type="match status" value="1"/>
</dbReference>
<dbReference type="PANTHER" id="PTHR30426:SF0">
    <property type="entry name" value="4-HYDROXY-3-METHYLBUT-2-ENYL DIPHOSPHATE REDUCTASE"/>
    <property type="match status" value="1"/>
</dbReference>
<dbReference type="Pfam" id="PF02401">
    <property type="entry name" value="LYTB"/>
    <property type="match status" value="1"/>
</dbReference>
<organism>
    <name type="scientific">Neisseria meningitidis serogroup A / serotype 4A (strain DSM 15465 / Z2491)</name>
    <dbReference type="NCBI Taxonomy" id="122587"/>
    <lineage>
        <taxon>Bacteria</taxon>
        <taxon>Pseudomonadati</taxon>
        <taxon>Pseudomonadota</taxon>
        <taxon>Betaproteobacteria</taxon>
        <taxon>Neisseriales</taxon>
        <taxon>Neisseriaceae</taxon>
        <taxon>Neisseria</taxon>
    </lineage>
</organism>
<comment type="function">
    <text evidence="1">Catalyzes the conversion of 1-hydroxy-2-methyl-2-(E)-butenyl 4-diphosphate (HMBPP) into a mixture of isopentenyl diphosphate (IPP) and dimethylallyl diphosphate (DMAPP). Acts in the terminal step of the DOXP/MEP pathway for isoprenoid precursor biosynthesis.</text>
</comment>
<comment type="catalytic activity">
    <reaction evidence="1">
        <text>isopentenyl diphosphate + 2 oxidized [2Fe-2S]-[ferredoxin] + H2O = (2E)-4-hydroxy-3-methylbut-2-enyl diphosphate + 2 reduced [2Fe-2S]-[ferredoxin] + 2 H(+)</text>
        <dbReference type="Rhea" id="RHEA:24488"/>
        <dbReference type="Rhea" id="RHEA-COMP:10000"/>
        <dbReference type="Rhea" id="RHEA-COMP:10001"/>
        <dbReference type="ChEBI" id="CHEBI:15377"/>
        <dbReference type="ChEBI" id="CHEBI:15378"/>
        <dbReference type="ChEBI" id="CHEBI:33737"/>
        <dbReference type="ChEBI" id="CHEBI:33738"/>
        <dbReference type="ChEBI" id="CHEBI:128753"/>
        <dbReference type="ChEBI" id="CHEBI:128769"/>
        <dbReference type="EC" id="1.17.7.4"/>
    </reaction>
</comment>
<comment type="catalytic activity">
    <reaction evidence="1">
        <text>dimethylallyl diphosphate + 2 oxidized [2Fe-2S]-[ferredoxin] + H2O = (2E)-4-hydroxy-3-methylbut-2-enyl diphosphate + 2 reduced [2Fe-2S]-[ferredoxin] + 2 H(+)</text>
        <dbReference type="Rhea" id="RHEA:24825"/>
        <dbReference type="Rhea" id="RHEA-COMP:10000"/>
        <dbReference type="Rhea" id="RHEA-COMP:10001"/>
        <dbReference type="ChEBI" id="CHEBI:15377"/>
        <dbReference type="ChEBI" id="CHEBI:15378"/>
        <dbReference type="ChEBI" id="CHEBI:33737"/>
        <dbReference type="ChEBI" id="CHEBI:33738"/>
        <dbReference type="ChEBI" id="CHEBI:57623"/>
        <dbReference type="ChEBI" id="CHEBI:128753"/>
        <dbReference type="EC" id="1.17.7.4"/>
    </reaction>
</comment>
<comment type="cofactor">
    <cofactor evidence="1">
        <name>[4Fe-4S] cluster</name>
        <dbReference type="ChEBI" id="CHEBI:49883"/>
    </cofactor>
    <text evidence="1">Binds 1 [4Fe-4S] cluster per subunit.</text>
</comment>
<comment type="pathway">
    <text evidence="1">Isoprenoid biosynthesis; dimethylallyl diphosphate biosynthesis; dimethylallyl diphosphate from (2E)-4-hydroxy-3-methylbutenyl diphosphate: step 1/1.</text>
</comment>
<comment type="pathway">
    <text evidence="1">Isoprenoid biosynthesis; isopentenyl diphosphate biosynthesis via DXP pathway; isopentenyl diphosphate from 1-deoxy-D-xylulose 5-phosphate: step 6/6.</text>
</comment>
<comment type="similarity">
    <text evidence="1">Belongs to the IspH family.</text>
</comment>
<evidence type="ECO:0000255" key="1">
    <source>
        <dbReference type="HAMAP-Rule" id="MF_00191"/>
    </source>
</evidence>
<accession>P65191</accession>
<accession>A1IQ64</accession>
<accession>Q9JR39</accession>
<reference key="1">
    <citation type="journal article" date="2000" name="Nature">
        <title>Complete DNA sequence of a serogroup A strain of Neisseria meningitidis Z2491.</title>
        <authorList>
            <person name="Parkhill J."/>
            <person name="Achtman M."/>
            <person name="James K.D."/>
            <person name="Bentley S.D."/>
            <person name="Churcher C.M."/>
            <person name="Klee S.R."/>
            <person name="Morelli G."/>
            <person name="Basham D."/>
            <person name="Brown D."/>
            <person name="Chillingworth T."/>
            <person name="Davies R.M."/>
            <person name="Davis P."/>
            <person name="Devlin K."/>
            <person name="Feltwell T."/>
            <person name="Hamlin N."/>
            <person name="Holroyd S."/>
            <person name="Jagels K."/>
            <person name="Leather S."/>
            <person name="Moule S."/>
            <person name="Mungall K.L."/>
            <person name="Quail M.A."/>
            <person name="Rajandream M.A."/>
            <person name="Rutherford K.M."/>
            <person name="Simmonds M."/>
            <person name="Skelton J."/>
            <person name="Whitehead S."/>
            <person name="Spratt B.G."/>
            <person name="Barrell B.G."/>
        </authorList>
    </citation>
    <scope>NUCLEOTIDE SEQUENCE [LARGE SCALE GENOMIC DNA]</scope>
    <source>
        <strain>DSM 15465 / Z2491</strain>
    </source>
</reference>
<feature type="chain" id="PRO_0000128844" description="4-hydroxy-3-methylbut-2-enyl diphosphate reductase">
    <location>
        <begin position="1"/>
        <end position="322"/>
    </location>
</feature>
<feature type="active site" description="Proton donor" evidence="1">
    <location>
        <position position="129"/>
    </location>
</feature>
<feature type="binding site" evidence="1">
    <location>
        <position position="15"/>
    </location>
    <ligand>
        <name>[4Fe-4S] cluster</name>
        <dbReference type="ChEBI" id="CHEBI:49883"/>
    </ligand>
</feature>
<feature type="binding site" evidence="1">
    <location>
        <position position="44"/>
    </location>
    <ligand>
        <name>(2E)-4-hydroxy-3-methylbut-2-enyl diphosphate</name>
        <dbReference type="ChEBI" id="CHEBI:128753"/>
    </ligand>
</feature>
<feature type="binding site" evidence="1">
    <location>
        <position position="44"/>
    </location>
    <ligand>
        <name>dimethylallyl diphosphate</name>
        <dbReference type="ChEBI" id="CHEBI:57623"/>
    </ligand>
</feature>
<feature type="binding site" evidence="1">
    <location>
        <position position="44"/>
    </location>
    <ligand>
        <name>isopentenyl diphosphate</name>
        <dbReference type="ChEBI" id="CHEBI:128769"/>
    </ligand>
</feature>
<feature type="binding site" evidence="1">
    <location>
        <position position="77"/>
    </location>
    <ligand>
        <name>(2E)-4-hydroxy-3-methylbut-2-enyl diphosphate</name>
        <dbReference type="ChEBI" id="CHEBI:128753"/>
    </ligand>
</feature>
<feature type="binding site" evidence="1">
    <location>
        <position position="77"/>
    </location>
    <ligand>
        <name>dimethylallyl diphosphate</name>
        <dbReference type="ChEBI" id="CHEBI:57623"/>
    </ligand>
</feature>
<feature type="binding site" evidence="1">
    <location>
        <position position="77"/>
    </location>
    <ligand>
        <name>isopentenyl diphosphate</name>
        <dbReference type="ChEBI" id="CHEBI:128769"/>
    </ligand>
</feature>
<feature type="binding site" evidence="1">
    <location>
        <position position="99"/>
    </location>
    <ligand>
        <name>[4Fe-4S] cluster</name>
        <dbReference type="ChEBI" id="CHEBI:49883"/>
    </ligand>
</feature>
<feature type="binding site" evidence="1">
    <location>
        <position position="127"/>
    </location>
    <ligand>
        <name>(2E)-4-hydroxy-3-methylbut-2-enyl diphosphate</name>
        <dbReference type="ChEBI" id="CHEBI:128753"/>
    </ligand>
</feature>
<feature type="binding site" evidence="1">
    <location>
        <position position="127"/>
    </location>
    <ligand>
        <name>dimethylallyl diphosphate</name>
        <dbReference type="ChEBI" id="CHEBI:57623"/>
    </ligand>
</feature>
<feature type="binding site" evidence="1">
    <location>
        <position position="127"/>
    </location>
    <ligand>
        <name>isopentenyl diphosphate</name>
        <dbReference type="ChEBI" id="CHEBI:128769"/>
    </ligand>
</feature>
<feature type="binding site" evidence="1">
    <location>
        <position position="168"/>
    </location>
    <ligand>
        <name>(2E)-4-hydroxy-3-methylbut-2-enyl diphosphate</name>
        <dbReference type="ChEBI" id="CHEBI:128753"/>
    </ligand>
</feature>
<feature type="binding site" evidence="1">
    <location>
        <position position="198"/>
    </location>
    <ligand>
        <name>[4Fe-4S] cluster</name>
        <dbReference type="ChEBI" id="CHEBI:49883"/>
    </ligand>
</feature>
<feature type="binding site" evidence="1">
    <location>
        <position position="226"/>
    </location>
    <ligand>
        <name>(2E)-4-hydroxy-3-methylbut-2-enyl diphosphate</name>
        <dbReference type="ChEBI" id="CHEBI:128753"/>
    </ligand>
</feature>
<feature type="binding site" evidence="1">
    <location>
        <position position="226"/>
    </location>
    <ligand>
        <name>dimethylallyl diphosphate</name>
        <dbReference type="ChEBI" id="CHEBI:57623"/>
    </ligand>
</feature>
<feature type="binding site" evidence="1">
    <location>
        <position position="226"/>
    </location>
    <ligand>
        <name>isopentenyl diphosphate</name>
        <dbReference type="ChEBI" id="CHEBI:128769"/>
    </ligand>
</feature>
<feature type="binding site" evidence="1">
    <location>
        <position position="227"/>
    </location>
    <ligand>
        <name>(2E)-4-hydroxy-3-methylbut-2-enyl diphosphate</name>
        <dbReference type="ChEBI" id="CHEBI:128753"/>
    </ligand>
</feature>
<feature type="binding site" evidence="1">
    <location>
        <position position="227"/>
    </location>
    <ligand>
        <name>dimethylallyl diphosphate</name>
        <dbReference type="ChEBI" id="CHEBI:57623"/>
    </ligand>
</feature>
<feature type="binding site" evidence="1">
    <location>
        <position position="227"/>
    </location>
    <ligand>
        <name>isopentenyl diphosphate</name>
        <dbReference type="ChEBI" id="CHEBI:128769"/>
    </ligand>
</feature>
<feature type="binding site" evidence="1">
    <location>
        <position position="228"/>
    </location>
    <ligand>
        <name>(2E)-4-hydroxy-3-methylbut-2-enyl diphosphate</name>
        <dbReference type="ChEBI" id="CHEBI:128753"/>
    </ligand>
</feature>
<feature type="binding site" evidence="1">
    <location>
        <position position="228"/>
    </location>
    <ligand>
        <name>dimethylallyl diphosphate</name>
        <dbReference type="ChEBI" id="CHEBI:57623"/>
    </ligand>
</feature>
<feature type="binding site" evidence="1">
    <location>
        <position position="228"/>
    </location>
    <ligand>
        <name>isopentenyl diphosphate</name>
        <dbReference type="ChEBI" id="CHEBI:128769"/>
    </ligand>
</feature>
<feature type="binding site" evidence="1">
    <location>
        <position position="270"/>
    </location>
    <ligand>
        <name>(2E)-4-hydroxy-3-methylbut-2-enyl diphosphate</name>
        <dbReference type="ChEBI" id="CHEBI:128753"/>
    </ligand>
</feature>
<feature type="binding site" evidence="1">
    <location>
        <position position="270"/>
    </location>
    <ligand>
        <name>dimethylallyl diphosphate</name>
        <dbReference type="ChEBI" id="CHEBI:57623"/>
    </ligand>
</feature>
<feature type="binding site" evidence="1">
    <location>
        <position position="270"/>
    </location>
    <ligand>
        <name>isopentenyl diphosphate</name>
        <dbReference type="ChEBI" id="CHEBI:128769"/>
    </ligand>
</feature>
<proteinExistence type="inferred from homology"/>
<sequence>MNEKTIILANPRGFCAGVDRAISIVERALEEFGAPIYVRHEVVHNKFVVDNLREKGAVFIEDLAEVPPGATLVYSAHGVSKAVRQEAAERGFRVFDATCPLVTKVHKEVARLDAQDCEIIMIGHKGHVEVEGTMGQLAPGKMLLVETVGDVAKLEVRNPDKLAYVSQTTLSVDETKDIIAALNARFPNIRNPHKEDICYATTNRQTAVKELAEQCDIVIVVGSPNSSNSNRLREVAASRGIDAYMVDNAGYLQRAWFEGKNKVGVTAGASAPEVLVREVLATIRGWGHETVREGEGAEESIVFVLPKELRREGETKPDLCKR</sequence>
<keyword id="KW-0004">4Fe-4S</keyword>
<keyword id="KW-0408">Iron</keyword>
<keyword id="KW-0411">Iron-sulfur</keyword>
<keyword id="KW-0414">Isoprene biosynthesis</keyword>
<keyword id="KW-0479">Metal-binding</keyword>
<keyword id="KW-0560">Oxidoreductase</keyword>
<name>ISPH_NEIMA</name>
<gene>
    <name evidence="1" type="primary">ispH</name>
    <name type="synonym">lytB</name>
    <name type="ordered locus">NMA0624</name>
</gene>